<sequence length="428" mass="49554">MNRQGNRKTTKEGSNDLKFQNFSLPKNRSWPRINSATGQYQRMNKPLLDWERNFAAVLDGAKGHSDDDYDDPELRMEETWQSIKILPARPIKESEYADTHYFKVAMDTPLPLDTRTSISIGQPTWNTQTRLERVDKPISKDVRSQNIKGDASVRKNKIPLPPPRPLITLPKKYQPLPPEPESSRPPLSQRHTFPEVQRMPSQISLRDLSEVLEAEKVPHNQRKPESTHLLENQNTQEIPLAISSSSFTTSNHSVQNRDHRGGMQPCSPQRCQPPASCSPHENILPYKYTSWRPPFPKRSDRKDVQHNEWYIGEYSRQAVEEAFMKENKDGSFLVRDCSTKSKEEPYVLAVFYENKVYNVKIRFLERNQQFALGTGLRGDEKFDSVEDIIEHYKNFPIILIDGKDKTGVHRKQCHLTQPLPLTRHLLPL</sequence>
<reference key="1">
    <citation type="submission" date="2003-05" db="EMBL/GenBank/DDBJ databases">
        <title>Genomic organization of human MIST gene.</title>
        <authorList>
            <person name="Goitsuka R."/>
        </authorList>
    </citation>
    <scope>NUCLEOTIDE SEQUENCE [MRNA] (ISOFORM 1)</scope>
</reference>
<reference key="2">
    <citation type="journal article" date="2005" name="Nature">
        <title>Generation and annotation of the DNA sequences of human chromosomes 2 and 4.</title>
        <authorList>
            <person name="Hillier L.W."/>
            <person name="Graves T.A."/>
            <person name="Fulton R.S."/>
            <person name="Fulton L.A."/>
            <person name="Pepin K.H."/>
            <person name="Minx P."/>
            <person name="Wagner-McPherson C."/>
            <person name="Layman D."/>
            <person name="Wylie K."/>
            <person name="Sekhon M."/>
            <person name="Becker M.C."/>
            <person name="Fewell G.A."/>
            <person name="Delehaunty K.D."/>
            <person name="Miner T.L."/>
            <person name="Nash W.E."/>
            <person name="Kremitzki C."/>
            <person name="Oddy L."/>
            <person name="Du H."/>
            <person name="Sun H."/>
            <person name="Bradshaw-Cordum H."/>
            <person name="Ali J."/>
            <person name="Carter J."/>
            <person name="Cordes M."/>
            <person name="Harris A."/>
            <person name="Isak A."/>
            <person name="van Brunt A."/>
            <person name="Nguyen C."/>
            <person name="Du F."/>
            <person name="Courtney L."/>
            <person name="Kalicki J."/>
            <person name="Ozersky P."/>
            <person name="Abbott S."/>
            <person name="Armstrong J."/>
            <person name="Belter E.A."/>
            <person name="Caruso L."/>
            <person name="Cedroni M."/>
            <person name="Cotton M."/>
            <person name="Davidson T."/>
            <person name="Desai A."/>
            <person name="Elliott G."/>
            <person name="Erb T."/>
            <person name="Fronick C."/>
            <person name="Gaige T."/>
            <person name="Haakenson W."/>
            <person name="Haglund K."/>
            <person name="Holmes A."/>
            <person name="Harkins R."/>
            <person name="Kim K."/>
            <person name="Kruchowski S.S."/>
            <person name="Strong C.M."/>
            <person name="Grewal N."/>
            <person name="Goyea E."/>
            <person name="Hou S."/>
            <person name="Levy A."/>
            <person name="Martinka S."/>
            <person name="Mead K."/>
            <person name="McLellan M.D."/>
            <person name="Meyer R."/>
            <person name="Randall-Maher J."/>
            <person name="Tomlinson C."/>
            <person name="Dauphin-Kohlberg S."/>
            <person name="Kozlowicz-Reilly A."/>
            <person name="Shah N."/>
            <person name="Swearengen-Shahid S."/>
            <person name="Snider J."/>
            <person name="Strong J.T."/>
            <person name="Thompson J."/>
            <person name="Yoakum M."/>
            <person name="Leonard S."/>
            <person name="Pearman C."/>
            <person name="Trani L."/>
            <person name="Radionenko M."/>
            <person name="Waligorski J.E."/>
            <person name="Wang C."/>
            <person name="Rock S.M."/>
            <person name="Tin-Wollam A.-M."/>
            <person name="Maupin R."/>
            <person name="Latreille P."/>
            <person name="Wendl M.C."/>
            <person name="Yang S.-P."/>
            <person name="Pohl C."/>
            <person name="Wallis J.W."/>
            <person name="Spieth J."/>
            <person name="Bieri T.A."/>
            <person name="Berkowicz N."/>
            <person name="Nelson J.O."/>
            <person name="Osborne J."/>
            <person name="Ding L."/>
            <person name="Meyer R."/>
            <person name="Sabo A."/>
            <person name="Shotland Y."/>
            <person name="Sinha P."/>
            <person name="Wohldmann P.E."/>
            <person name="Cook L.L."/>
            <person name="Hickenbotham M.T."/>
            <person name="Eldred J."/>
            <person name="Williams D."/>
            <person name="Jones T.A."/>
            <person name="She X."/>
            <person name="Ciccarelli F.D."/>
            <person name="Izaurralde E."/>
            <person name="Taylor J."/>
            <person name="Schmutz J."/>
            <person name="Myers R.M."/>
            <person name="Cox D.R."/>
            <person name="Huang X."/>
            <person name="McPherson J.D."/>
            <person name="Mardis E.R."/>
            <person name="Clifton S.W."/>
            <person name="Warren W.C."/>
            <person name="Chinwalla A.T."/>
            <person name="Eddy S.R."/>
            <person name="Marra M.A."/>
            <person name="Ovcharenko I."/>
            <person name="Furey T.S."/>
            <person name="Miller W."/>
            <person name="Eichler E.E."/>
            <person name="Bork P."/>
            <person name="Suyama M."/>
            <person name="Torrents D."/>
            <person name="Waterston R.H."/>
            <person name="Wilson R.K."/>
        </authorList>
    </citation>
    <scope>NUCLEOTIDE SEQUENCE [LARGE SCALE GENOMIC DNA]</scope>
</reference>
<reference key="3">
    <citation type="journal article" date="2004" name="Genome Res.">
        <title>The status, quality, and expansion of the NIH full-length cDNA project: the Mammalian Gene Collection (MGC).</title>
        <authorList>
            <consortium name="The MGC Project Team"/>
        </authorList>
    </citation>
    <scope>NUCLEOTIDE SEQUENCE [LARGE SCALE MRNA] (ISOFORM 2)</scope>
    <source>
        <tissue>Brain</tissue>
    </source>
</reference>
<reference key="4">
    <citation type="journal article" date="2000" name="Int. Immunol.">
        <title>A BASH/SLP-76-related adaptor protein MIST/Clnk involved in IgE receptor-mediated mast cell degranulation.</title>
        <authorList>
            <person name="Goitsuka R."/>
            <person name="Kanazashi H."/>
            <person name="Sasanuma H."/>
            <person name="Fujimura Y.-C."/>
            <person name="Hidaka Y."/>
            <person name="Tatsuno A."/>
            <person name="Ra C."/>
            <person name="Hayashi K."/>
            <person name="Kitamura D."/>
        </authorList>
    </citation>
    <scope>NUCLEOTIDE SEQUENCE [MRNA] OF 19-394 (ISOFORM 1)</scope>
    <scope>IDENTIFICATION (ISOFORM 3)</scope>
</reference>
<reference key="5">
    <citation type="journal article" date="2015" name="Biochem. Biophys. Res. Commun.">
        <title>Clnk plays a role in TNF-alpha-induced cell death in murine fibrosarcoma cell line L929.</title>
        <authorList>
            <person name="Xu M."/>
            <person name="Cai C."/>
            <person name="Sun X."/>
            <person name="Chen W."/>
            <person name="Li Q."/>
            <person name="Zhou H."/>
        </authorList>
    </citation>
    <scope>INTERACTION WITH LBR AND AGO2</scope>
    <scope>SUBCELLULAR LOCATION</scope>
</reference>
<gene>
    <name type="primary">CLNK</name>
    <name type="synonym">MIST</name>
</gene>
<organism>
    <name type="scientific">Homo sapiens</name>
    <name type="common">Human</name>
    <dbReference type="NCBI Taxonomy" id="9606"/>
    <lineage>
        <taxon>Eukaryota</taxon>
        <taxon>Metazoa</taxon>
        <taxon>Chordata</taxon>
        <taxon>Craniata</taxon>
        <taxon>Vertebrata</taxon>
        <taxon>Euteleostomi</taxon>
        <taxon>Mammalia</taxon>
        <taxon>Eutheria</taxon>
        <taxon>Euarchontoglires</taxon>
        <taxon>Primates</taxon>
        <taxon>Haplorrhini</taxon>
        <taxon>Catarrhini</taxon>
        <taxon>Hominidae</taxon>
        <taxon>Homo</taxon>
    </lineage>
</organism>
<feature type="chain" id="PRO_0000314597" description="Cytokine-dependent hematopoietic cell linker">
    <location>
        <begin position="1"/>
        <end position="428"/>
    </location>
</feature>
<feature type="domain" description="SH2" evidence="2">
    <location>
        <begin position="309"/>
        <end position="419"/>
    </location>
</feature>
<feature type="region of interest" description="Disordered" evidence="3">
    <location>
        <begin position="1"/>
        <end position="22"/>
    </location>
</feature>
<feature type="region of interest" description="Disordered" evidence="3">
    <location>
        <begin position="135"/>
        <end position="198"/>
    </location>
</feature>
<feature type="region of interest" description="Mediates interaction with PLCG1; essential for BCR signaling; involved in restoration of BCR-induced calcium response and ERK2 and JNK2 activation in BLNK-deficient cells expressing LAT" evidence="1">
    <location>
        <begin position="159"/>
        <end position="164"/>
    </location>
</feature>
<feature type="region of interest" description="Mediates interaction with LAT, GRB2, and FGR; involved in translocation to the glycolipid-enriched microdomain and restoration of BCR-induced calcium response in BLNK-deficient DT40 cells expressing LAT" evidence="1">
    <location>
        <begin position="178"/>
        <end position="180"/>
    </location>
</feature>
<feature type="region of interest" description="Disordered" evidence="3">
    <location>
        <begin position="244"/>
        <end position="271"/>
    </location>
</feature>
<feature type="compositionally biased region" description="Low complexity" evidence="3">
    <location>
        <begin position="244"/>
        <end position="253"/>
    </location>
</feature>
<feature type="site" description="Interaction with FYB1" evidence="1">
    <location>
        <position position="335"/>
    </location>
</feature>
<feature type="modified residue" description="Phosphotyrosine; by LYN" evidence="1">
    <location>
        <position position="69"/>
    </location>
</feature>
<feature type="modified residue" description="Phosphotyrosine; by LYN" evidence="1">
    <location>
        <position position="96"/>
    </location>
</feature>
<feature type="splice variant" id="VSP_030330" description="In isoform 2." evidence="5">
    <location>
        <begin position="1"/>
        <end position="42"/>
    </location>
</feature>
<feature type="splice variant" id="VSP_030331" description="In isoform 3." evidence="7">
    <location>
        <begin position="147"/>
        <end position="183"/>
    </location>
</feature>
<feature type="splice variant" id="VSP_030332" description="In isoform 2." evidence="5">
    <original>V</original>
    <variation>P</variation>
    <location>
        <position position="211"/>
    </location>
</feature>
<feature type="splice variant" id="VSP_030333" description="In isoform 2." evidence="5">
    <location>
        <begin position="212"/>
        <end position="428"/>
    </location>
</feature>
<feature type="sequence variant" id="VAR_037984" description="In dbSNP:rs16869924.">
    <original>S</original>
    <variation>G</variation>
    <location>
        <position position="65"/>
    </location>
</feature>
<feature type="sequence conflict" description="In Ref. 1; BAC76765 and 3; BAA96241." evidence="7" ref="1 3">
    <original>K</original>
    <variation>R</variation>
    <location>
        <position position="140"/>
    </location>
</feature>
<feature type="sequence conflict" description="In Ref. 1; BAC76765 and 3; BAA96241." evidence="7" ref="1 3">
    <original>R</original>
    <variation>G</variation>
    <location>
        <position position="198"/>
    </location>
</feature>
<proteinExistence type="evidence at protein level"/>
<comment type="function">
    <text evidence="1">An adapter protein which plays a role in the regulation of immunoreceptor signaling, including PLC-gamma-mediated B-cell antigen receptor (BCR) signaling and FC-epsilon R1-mediated mast cell degranulation (By similarity). Together with FGR, it acts as a negative regulator of natural killer cell-activating receptors and inhibits interferon-gamma production (By similarity). Acts as a positive regulator of both T-cell receptor and natural killer T (NKT) cell receptor signaling in CD4-positive NKT cells (By similarity). Together with MAP4K1, it enhances CD3-triggered activation of T-cells and subsequent IL2 production (By similarity). May be involved in tumor necrosis factor induced cell death by promoting reactive oxidative species generation, and MLKL oligomerization, ultimately leading to necrosis (By similarity). Involved in phosphorylation of LAT (By similarity). May be involved in high affinity immunoglobulin epsilon receptor signaling in mast cells (By similarity).</text>
</comment>
<comment type="subunit">
    <text evidence="1 4">When phosphorylated, interacts with PLCG1, PLCG2, GRB2, VAV and LAT (By similarity). Interacts with LBR and AGO2 (PubMed:26009488). Interacts with FGR (By similarity). Part of a complex consisting of CLNK, SKAP1 and FYB1 (By similarity). Interacts (via SH2 domain) with FYB1; this interaction allows SKAP1 and FYB1 to promote tyrosine phosphorylation of CLNK by LYN (By similarity). Interacts (via SH2 domain) with MAP4K1 (By similarity).</text>
</comment>
<comment type="interaction">
    <interactant intactId="EBI-7878194">
        <id>Q7Z7G1</id>
    </interactant>
    <interactant intactId="EBI-297353">
        <id>P00533</id>
        <label>EGFR</label>
    </interactant>
    <organismsDiffer>false</organismsDiffer>
    <experiments>2</experiments>
</comment>
<comment type="interaction">
    <interactant intactId="EBI-7878194">
        <id>Q7Z7G1</id>
    </interactant>
    <interactant intactId="EBI-641062">
        <id>P04626</id>
        <label>ERBB2</label>
    </interactant>
    <organismsDiffer>false</organismsDiffer>
    <experiments>2</experiments>
</comment>
<comment type="subcellular location">
    <subcellularLocation>
        <location evidence="4">Cytoplasm</location>
    </subcellularLocation>
</comment>
<comment type="alternative products">
    <event type="alternative splicing"/>
    <isoform>
        <id>Q7Z7G1-1</id>
        <name>1</name>
        <sequence type="displayed"/>
    </isoform>
    <isoform>
        <id>Q7Z7G1-2</id>
        <name>2</name>
        <sequence type="described" ref="VSP_030330 VSP_030332 VSP_030333"/>
    </isoform>
    <isoform>
        <id>Q7Z7G1-3</id>
        <name>3</name>
        <sequence type="described" ref="VSP_030331"/>
    </isoform>
</comment>
<comment type="domain">
    <text evidence="1">The N-terminal proline-rich region interacts with the SH3 domain of PLCG1.</text>
</comment>
<comment type="domain">
    <text evidence="1">The SH2 domain is important for restoration of BCR-induced calcium response and JNK2 activation in BLNK-deficient DT40 cells expressing LAT.</text>
</comment>
<comment type="PTM">
    <text evidence="1">Tyrosine-phosphorylated upon BCR cross-linking. Tyrosine phosphorylation at both Tyr-69 and Tyr-96 are required for BCR-induced calcium response and are essential to restore PLCG2-mediated signaling in BLNK-deficient DT40 cells, but this phosphorylation is dispensable in cells expressing LAT. Interacts with the SH2 domain of PLCG1 via phosphorylated Tyr-96 (By similarity). Tyrosine phosphorylation is increased when complexed with SKAP1 and FYB1 (By similarity).</text>
</comment>
<keyword id="KW-0025">Alternative splicing</keyword>
<keyword id="KW-0963">Cytoplasm</keyword>
<keyword id="KW-0597">Phosphoprotein</keyword>
<keyword id="KW-1267">Proteomics identification</keyword>
<keyword id="KW-1185">Reference proteome</keyword>
<keyword id="KW-0727">SH2 domain</keyword>
<evidence type="ECO:0000250" key="1">
    <source>
        <dbReference type="UniProtKB" id="Q9QZE2"/>
    </source>
</evidence>
<evidence type="ECO:0000255" key="2">
    <source>
        <dbReference type="PROSITE-ProRule" id="PRU00191"/>
    </source>
</evidence>
<evidence type="ECO:0000256" key="3">
    <source>
        <dbReference type="SAM" id="MobiDB-lite"/>
    </source>
</evidence>
<evidence type="ECO:0000269" key="4">
    <source>
    </source>
</evidence>
<evidence type="ECO:0000303" key="5">
    <source>
    </source>
</evidence>
<evidence type="ECO:0000303" key="6">
    <source ref="1"/>
</evidence>
<evidence type="ECO:0000305" key="7"/>
<dbReference type="EMBL" id="AB110420">
    <property type="protein sequence ID" value="BAC76765.1"/>
    <property type="molecule type" value="mRNA"/>
</dbReference>
<dbReference type="EMBL" id="AC005599">
    <property type="status" value="NOT_ANNOTATED_CDS"/>
    <property type="molecule type" value="Genomic_DNA"/>
</dbReference>
<dbReference type="EMBL" id="BC029887">
    <property type="protein sequence ID" value="AAH29887.1"/>
    <property type="molecule type" value="mRNA"/>
</dbReference>
<dbReference type="EMBL" id="AB032369">
    <property type="protein sequence ID" value="BAA96241.1"/>
    <property type="molecule type" value="mRNA"/>
</dbReference>
<dbReference type="CCDS" id="CCDS47024.1">
    <molecule id="Q7Z7G1-1"/>
</dbReference>
<dbReference type="RefSeq" id="NP_443196.2">
    <molecule id="Q7Z7G1-1"/>
    <property type="nucleotide sequence ID" value="NM_052964.4"/>
</dbReference>
<dbReference type="SMR" id="Q7Z7G1"/>
<dbReference type="BioGRID" id="125512">
    <property type="interactions" value="29"/>
</dbReference>
<dbReference type="FunCoup" id="Q7Z7G1">
    <property type="interactions" value="414"/>
</dbReference>
<dbReference type="IntAct" id="Q7Z7G1">
    <property type="interactions" value="27"/>
</dbReference>
<dbReference type="MINT" id="Q7Z7G1"/>
<dbReference type="STRING" id="9606.ENSP00000226951"/>
<dbReference type="GlyGen" id="Q7Z7G1">
    <property type="glycosylation" value="1 site, 1 O-linked glycan (1 site)"/>
</dbReference>
<dbReference type="iPTMnet" id="Q7Z7G1"/>
<dbReference type="PhosphoSitePlus" id="Q7Z7G1"/>
<dbReference type="BioMuta" id="CLNK"/>
<dbReference type="DMDM" id="166217263"/>
<dbReference type="jPOST" id="Q7Z7G1"/>
<dbReference type="MassIVE" id="Q7Z7G1"/>
<dbReference type="PaxDb" id="9606-ENSP00000226951"/>
<dbReference type="PeptideAtlas" id="Q7Z7G1"/>
<dbReference type="ProteomicsDB" id="69537">
    <molecule id="Q7Z7G1-1"/>
</dbReference>
<dbReference type="ProteomicsDB" id="69538">
    <molecule id="Q7Z7G1-2"/>
</dbReference>
<dbReference type="ProteomicsDB" id="69539">
    <molecule id="Q7Z7G1-3"/>
</dbReference>
<dbReference type="Antibodypedia" id="50006">
    <property type="antibodies" value="71 antibodies from 11 providers"/>
</dbReference>
<dbReference type="DNASU" id="116449"/>
<dbReference type="Ensembl" id="ENST00000226951.11">
    <molecule id="Q7Z7G1-1"/>
    <property type="protein sequence ID" value="ENSP00000226951.6"/>
    <property type="gene ID" value="ENSG00000109684.16"/>
</dbReference>
<dbReference type="Ensembl" id="ENST00000507719.1">
    <molecule id="Q7Z7G1-2"/>
    <property type="protein sequence ID" value="ENSP00000427208.1"/>
    <property type="gene ID" value="ENSG00000109684.16"/>
</dbReference>
<dbReference type="GeneID" id="116449"/>
<dbReference type="KEGG" id="hsa:116449"/>
<dbReference type="MANE-Select" id="ENST00000226951.11">
    <property type="protein sequence ID" value="ENSP00000226951.6"/>
    <property type="RefSeq nucleotide sequence ID" value="NM_052964.4"/>
    <property type="RefSeq protein sequence ID" value="NP_443196.2"/>
</dbReference>
<dbReference type="UCSC" id="uc003gmo.5">
    <molecule id="Q7Z7G1-1"/>
    <property type="organism name" value="human"/>
</dbReference>
<dbReference type="AGR" id="HGNC:17438"/>
<dbReference type="CTD" id="116449"/>
<dbReference type="DisGeNET" id="116449"/>
<dbReference type="GeneCards" id="CLNK"/>
<dbReference type="HGNC" id="HGNC:17438">
    <property type="gene designation" value="CLNK"/>
</dbReference>
<dbReference type="HPA" id="ENSG00000109684">
    <property type="expression patterns" value="Tissue enhanced (kidney, lymphoid tissue)"/>
</dbReference>
<dbReference type="MIM" id="611434">
    <property type="type" value="gene"/>
</dbReference>
<dbReference type="neXtProt" id="NX_Q7Z7G1"/>
<dbReference type="NIAGADS" id="ENSG00000109684"/>
<dbReference type="OpenTargets" id="ENSG00000109684"/>
<dbReference type="PharmGKB" id="PA164718067"/>
<dbReference type="VEuPathDB" id="HostDB:ENSG00000109684"/>
<dbReference type="eggNOG" id="ENOG502S0EU">
    <property type="taxonomic scope" value="Eukaryota"/>
</dbReference>
<dbReference type="GeneTree" id="ENSGT00940000161846"/>
<dbReference type="HOGENOM" id="CLU_052668_0_0_1"/>
<dbReference type="InParanoid" id="Q7Z7G1"/>
<dbReference type="OMA" id="NTGWRKP"/>
<dbReference type="OrthoDB" id="9945442at2759"/>
<dbReference type="PAN-GO" id="Q7Z7G1">
    <property type="GO annotations" value="2 GO annotations based on evolutionary models"/>
</dbReference>
<dbReference type="PhylomeDB" id="Q7Z7G1"/>
<dbReference type="TreeFam" id="TF326567"/>
<dbReference type="PathwayCommons" id="Q7Z7G1"/>
<dbReference type="SignaLink" id="Q7Z7G1"/>
<dbReference type="BioGRID-ORCS" id="116449">
    <property type="hits" value="8 hits in 1139 CRISPR screens"/>
</dbReference>
<dbReference type="ChiTaRS" id="CLNK">
    <property type="organism name" value="human"/>
</dbReference>
<dbReference type="GenomeRNAi" id="116449"/>
<dbReference type="Pharos" id="Q7Z7G1">
    <property type="development level" value="Tbio"/>
</dbReference>
<dbReference type="PRO" id="PR:Q7Z7G1"/>
<dbReference type="Proteomes" id="UP000005640">
    <property type="component" value="Chromosome 4"/>
</dbReference>
<dbReference type="RNAct" id="Q7Z7G1">
    <property type="molecule type" value="protein"/>
</dbReference>
<dbReference type="Bgee" id="ENSG00000109684">
    <property type="expression patterns" value="Expressed in buccal mucosa cell and 80 other cell types or tissues"/>
</dbReference>
<dbReference type="ExpressionAtlas" id="Q7Z7G1">
    <property type="expression patterns" value="baseline and differential"/>
</dbReference>
<dbReference type="GO" id="GO:0005737">
    <property type="term" value="C:cytoplasm"/>
    <property type="evidence" value="ECO:0000315"/>
    <property type="project" value="UniProtKB"/>
</dbReference>
<dbReference type="GO" id="GO:0042629">
    <property type="term" value="C:mast cell granule"/>
    <property type="evidence" value="ECO:0007669"/>
    <property type="project" value="Ensembl"/>
</dbReference>
<dbReference type="GO" id="GO:0032991">
    <property type="term" value="C:protein-containing complex"/>
    <property type="evidence" value="ECO:0007669"/>
    <property type="project" value="Ensembl"/>
</dbReference>
<dbReference type="GO" id="GO:0044877">
    <property type="term" value="F:protein-containing complex binding"/>
    <property type="evidence" value="ECO:0007669"/>
    <property type="project" value="Ensembl"/>
</dbReference>
<dbReference type="GO" id="GO:0007169">
    <property type="term" value="P:cell surface receptor protein tyrosine kinase signaling pathway"/>
    <property type="evidence" value="ECO:0000318"/>
    <property type="project" value="GO_Central"/>
</dbReference>
<dbReference type="GO" id="GO:0035556">
    <property type="term" value="P:intracellular signal transduction"/>
    <property type="evidence" value="ECO:0000318"/>
    <property type="project" value="GO_Central"/>
</dbReference>
<dbReference type="GO" id="GO:0043303">
    <property type="term" value="P:mast cell degranulation"/>
    <property type="evidence" value="ECO:0007669"/>
    <property type="project" value="Ensembl"/>
</dbReference>
<dbReference type="GO" id="GO:0032815">
    <property type="term" value="P:negative regulation of natural killer cell activation"/>
    <property type="evidence" value="ECO:0007669"/>
    <property type="project" value="Ensembl"/>
</dbReference>
<dbReference type="GO" id="GO:0002729">
    <property type="term" value="P:positive regulation of natural killer cell cytokine production"/>
    <property type="evidence" value="ECO:0007669"/>
    <property type="project" value="Ensembl"/>
</dbReference>
<dbReference type="CDD" id="cd09929">
    <property type="entry name" value="SH2_BLNK_SLP-76"/>
    <property type="match status" value="1"/>
</dbReference>
<dbReference type="FunFam" id="3.30.505.10:FF:000016">
    <property type="entry name" value="B-cell linker protein isoform 2"/>
    <property type="match status" value="1"/>
</dbReference>
<dbReference type="Gene3D" id="3.30.505.10">
    <property type="entry name" value="SH2 domain"/>
    <property type="match status" value="1"/>
</dbReference>
<dbReference type="InterPro" id="IPR051751">
    <property type="entry name" value="Immunoreceptor_sig_adapters"/>
</dbReference>
<dbReference type="InterPro" id="IPR000980">
    <property type="entry name" value="SH2"/>
</dbReference>
<dbReference type="InterPro" id="IPR036860">
    <property type="entry name" value="SH2_dom_sf"/>
</dbReference>
<dbReference type="PANTHER" id="PTHR14098:SF2">
    <property type="entry name" value="CYTOKINE-DEPENDENT HEMATOPOIETIC CELL LINKER"/>
    <property type="match status" value="1"/>
</dbReference>
<dbReference type="PANTHER" id="PTHR14098">
    <property type="entry name" value="SH2 DOMAIN CONTAINING PROTEIN"/>
    <property type="match status" value="1"/>
</dbReference>
<dbReference type="Pfam" id="PF00017">
    <property type="entry name" value="SH2"/>
    <property type="match status" value="1"/>
</dbReference>
<dbReference type="PRINTS" id="PR00401">
    <property type="entry name" value="SH2DOMAIN"/>
</dbReference>
<dbReference type="SMART" id="SM00252">
    <property type="entry name" value="SH2"/>
    <property type="match status" value="1"/>
</dbReference>
<dbReference type="SUPFAM" id="SSF55550">
    <property type="entry name" value="SH2 domain"/>
    <property type="match status" value="1"/>
</dbReference>
<dbReference type="PROSITE" id="PS50001">
    <property type="entry name" value="SH2"/>
    <property type="match status" value="1"/>
</dbReference>
<name>CLNK_HUMAN</name>
<protein>
    <recommendedName>
        <fullName evidence="1">Cytokine-dependent hematopoietic cell linker</fullName>
    </recommendedName>
    <alternativeName>
        <fullName evidence="6">Mast cell immunoreceptor signal transducer</fullName>
    </alternativeName>
</protein>
<accession>Q7Z7G1</accession>
<accession>Q05C27</accession>
<accession>Q9P2U9</accession>